<gene>
    <name evidence="1" type="primary">rplD</name>
    <name type="ordered locus">BcerKBAB4_0106</name>
</gene>
<organism>
    <name type="scientific">Bacillus mycoides (strain KBAB4)</name>
    <name type="common">Bacillus weihenstephanensis</name>
    <dbReference type="NCBI Taxonomy" id="315730"/>
    <lineage>
        <taxon>Bacteria</taxon>
        <taxon>Bacillati</taxon>
        <taxon>Bacillota</taxon>
        <taxon>Bacilli</taxon>
        <taxon>Bacillales</taxon>
        <taxon>Bacillaceae</taxon>
        <taxon>Bacillus</taxon>
        <taxon>Bacillus cereus group</taxon>
    </lineage>
</organism>
<feature type="chain" id="PRO_1000142081" description="Large ribosomal subunit protein uL4">
    <location>
        <begin position="1"/>
        <end position="207"/>
    </location>
</feature>
<feature type="region of interest" description="Disordered" evidence="2">
    <location>
        <begin position="45"/>
        <end position="89"/>
    </location>
</feature>
<feature type="compositionally biased region" description="Basic residues" evidence="2">
    <location>
        <begin position="60"/>
        <end position="71"/>
    </location>
</feature>
<reference key="1">
    <citation type="journal article" date="2008" name="Chem. Biol. Interact.">
        <title>Extending the Bacillus cereus group genomics to putative food-borne pathogens of different toxicity.</title>
        <authorList>
            <person name="Lapidus A."/>
            <person name="Goltsman E."/>
            <person name="Auger S."/>
            <person name="Galleron N."/>
            <person name="Segurens B."/>
            <person name="Dossat C."/>
            <person name="Land M.L."/>
            <person name="Broussolle V."/>
            <person name="Brillard J."/>
            <person name="Guinebretiere M.-H."/>
            <person name="Sanchis V."/>
            <person name="Nguen-the C."/>
            <person name="Lereclus D."/>
            <person name="Richardson P."/>
            <person name="Wincker P."/>
            <person name="Weissenbach J."/>
            <person name="Ehrlich S.D."/>
            <person name="Sorokin A."/>
        </authorList>
    </citation>
    <scope>NUCLEOTIDE SEQUENCE [LARGE SCALE GENOMIC DNA]</scope>
    <source>
        <strain>KBAB4</strain>
    </source>
</reference>
<evidence type="ECO:0000255" key="1">
    <source>
        <dbReference type="HAMAP-Rule" id="MF_01328"/>
    </source>
</evidence>
<evidence type="ECO:0000256" key="2">
    <source>
        <dbReference type="SAM" id="MobiDB-lite"/>
    </source>
</evidence>
<evidence type="ECO:0000305" key="3"/>
<proteinExistence type="inferred from homology"/>
<comment type="function">
    <text evidence="1">One of the primary rRNA binding proteins, this protein initially binds near the 5'-end of the 23S rRNA. It is important during the early stages of 50S assembly. It makes multiple contacts with different domains of the 23S rRNA in the assembled 50S subunit and ribosome.</text>
</comment>
<comment type="function">
    <text evidence="1">Forms part of the polypeptide exit tunnel.</text>
</comment>
<comment type="subunit">
    <text evidence="1">Part of the 50S ribosomal subunit.</text>
</comment>
<comment type="similarity">
    <text evidence="1">Belongs to the universal ribosomal protein uL4 family.</text>
</comment>
<accession>A9VP78</accession>
<name>RL4_BACMK</name>
<sequence length="207" mass="22516">MPKVTVYNQTGSQVGEIELAEAIFGIEPNEAVLFEAVMMQRASLRQGTHKVKTRSEVRGGGRKPWRQKGTGRARQGSIRSPQWRGGGTVFGPTPRSYAYKLPKKVRRLAIKSALATKVVENNIVVLEDLVLNAPKTKDMVAVLKGLTVEKKALIVTADANESVELSARNIPGVTVITADGVNVLDVLHHDKLIMTKAAVEKVEEVLA</sequence>
<dbReference type="EMBL" id="CP000903">
    <property type="protein sequence ID" value="ABY41375.1"/>
    <property type="molecule type" value="Genomic_DNA"/>
</dbReference>
<dbReference type="RefSeq" id="WP_001127261.1">
    <property type="nucleotide sequence ID" value="NZ_CAKMRX030000129.1"/>
</dbReference>
<dbReference type="SMR" id="A9VP78"/>
<dbReference type="GeneID" id="92887804"/>
<dbReference type="KEGG" id="bwe:BcerKBAB4_0106"/>
<dbReference type="eggNOG" id="COG0088">
    <property type="taxonomic scope" value="Bacteria"/>
</dbReference>
<dbReference type="HOGENOM" id="CLU_041575_5_2_9"/>
<dbReference type="Proteomes" id="UP000002154">
    <property type="component" value="Chromosome"/>
</dbReference>
<dbReference type="GO" id="GO:1990904">
    <property type="term" value="C:ribonucleoprotein complex"/>
    <property type="evidence" value="ECO:0007669"/>
    <property type="project" value="UniProtKB-KW"/>
</dbReference>
<dbReference type="GO" id="GO:0005840">
    <property type="term" value="C:ribosome"/>
    <property type="evidence" value="ECO:0007669"/>
    <property type="project" value="UniProtKB-KW"/>
</dbReference>
<dbReference type="GO" id="GO:0019843">
    <property type="term" value="F:rRNA binding"/>
    <property type="evidence" value="ECO:0007669"/>
    <property type="project" value="UniProtKB-UniRule"/>
</dbReference>
<dbReference type="GO" id="GO:0003735">
    <property type="term" value="F:structural constituent of ribosome"/>
    <property type="evidence" value="ECO:0007669"/>
    <property type="project" value="InterPro"/>
</dbReference>
<dbReference type="GO" id="GO:0006412">
    <property type="term" value="P:translation"/>
    <property type="evidence" value="ECO:0007669"/>
    <property type="project" value="UniProtKB-UniRule"/>
</dbReference>
<dbReference type="FunFam" id="3.40.1370.10:FF:000003">
    <property type="entry name" value="50S ribosomal protein L4"/>
    <property type="match status" value="1"/>
</dbReference>
<dbReference type="Gene3D" id="3.40.1370.10">
    <property type="match status" value="1"/>
</dbReference>
<dbReference type="HAMAP" id="MF_01328_B">
    <property type="entry name" value="Ribosomal_uL4_B"/>
    <property type="match status" value="1"/>
</dbReference>
<dbReference type="InterPro" id="IPR002136">
    <property type="entry name" value="Ribosomal_uL4"/>
</dbReference>
<dbReference type="InterPro" id="IPR013005">
    <property type="entry name" value="Ribosomal_uL4-like"/>
</dbReference>
<dbReference type="InterPro" id="IPR023574">
    <property type="entry name" value="Ribosomal_uL4_dom_sf"/>
</dbReference>
<dbReference type="NCBIfam" id="TIGR03953">
    <property type="entry name" value="rplD_bact"/>
    <property type="match status" value="1"/>
</dbReference>
<dbReference type="PANTHER" id="PTHR10746">
    <property type="entry name" value="50S RIBOSOMAL PROTEIN L4"/>
    <property type="match status" value="1"/>
</dbReference>
<dbReference type="PANTHER" id="PTHR10746:SF6">
    <property type="entry name" value="LARGE RIBOSOMAL SUBUNIT PROTEIN UL4M"/>
    <property type="match status" value="1"/>
</dbReference>
<dbReference type="Pfam" id="PF00573">
    <property type="entry name" value="Ribosomal_L4"/>
    <property type="match status" value="1"/>
</dbReference>
<dbReference type="SUPFAM" id="SSF52166">
    <property type="entry name" value="Ribosomal protein L4"/>
    <property type="match status" value="1"/>
</dbReference>
<keyword id="KW-0687">Ribonucleoprotein</keyword>
<keyword id="KW-0689">Ribosomal protein</keyword>
<keyword id="KW-0694">RNA-binding</keyword>
<keyword id="KW-0699">rRNA-binding</keyword>
<protein>
    <recommendedName>
        <fullName evidence="1">Large ribosomal subunit protein uL4</fullName>
    </recommendedName>
    <alternativeName>
        <fullName evidence="3">50S ribosomal protein L4</fullName>
    </alternativeName>
</protein>